<comment type="function">
    <text evidence="1">Initiates the extrinsic pathway of blood coagulation. Serine protease that circulates in the blood in a zymogen form. Factor VII is converted to factor VIIa by factor Xa, factor XIIa, factor IXa, or thrombin by minor proteolysis. In the presence of tissue factor and calcium ions, factor VIIa then converts factor X to factor Xa by limited proteolysis. Factor VIIa also converts factor IX to factor IXa in the presence of tissue factor and calcium (By similarity).</text>
</comment>
<comment type="catalytic activity">
    <reaction>
        <text>Selective cleavage of Arg-|-Ile bond in factor X to form factor Xa.</text>
        <dbReference type="EC" id="3.4.21.21"/>
    </reaction>
</comment>
<comment type="subunit">
    <text evidence="1">Heterodimer of a light chain and a heavy chain linked by a disulfide bond.</text>
</comment>
<comment type="subcellular location">
    <subcellularLocation>
        <location evidence="1">Secreted</location>
    </subcellularLocation>
</comment>
<comment type="PTM">
    <text evidence="1">The vitamin K-dependent, enzymatic carboxylation of some glutamate residues allows the modified protein to bind calcium.</text>
</comment>
<comment type="PTM">
    <text evidence="1">The iron and 2-oxoglutarate dependent 3-hydroxylation of aspartate and asparagine is (R) stereospecific within EGF domains.</text>
</comment>
<comment type="PTM">
    <text evidence="1">O-glycosylated. O-fucosylated by POFUT1 on a conserved serine or threonine residue found in the consensus sequence C2-X(4,5)-[S/T]-C3 of EGF domains, where C2 and C3 are the second and third conserved cysteines.</text>
</comment>
<comment type="PTM">
    <text evidence="1">Can be either O-glucosylated or O-xylosylated at Ser-112 by POGLUT1.</text>
</comment>
<comment type="similarity">
    <text evidence="6">Belongs to the peptidase S1 family.</text>
</comment>
<accession>Q2F9P4</accession>
<evidence type="ECO:0000250" key="1"/>
<evidence type="ECO:0000250" key="2">
    <source>
        <dbReference type="UniProtKB" id="P08709"/>
    </source>
</evidence>
<evidence type="ECO:0000250" key="3">
    <source>
        <dbReference type="UniProtKB" id="P22457"/>
    </source>
</evidence>
<evidence type="ECO:0000255" key="4"/>
<evidence type="ECO:0000255" key="5">
    <source>
        <dbReference type="PROSITE-ProRule" id="PRU00076"/>
    </source>
</evidence>
<evidence type="ECO:0000255" key="6">
    <source>
        <dbReference type="PROSITE-ProRule" id="PRU00274"/>
    </source>
</evidence>
<evidence type="ECO:0000255" key="7">
    <source>
        <dbReference type="PROSITE-ProRule" id="PRU00463"/>
    </source>
</evidence>
<sequence>MVSQALRLLCLLLGLQGCLAAGGVAEASGGETRDMPWKPGPHRVFITQEEAHGVLHRRRRANAFLEELRPGSLERECKEEQCSFEEAREIFKDLERTKLFWISYSDGDQCASSPCQNGGSCKDQLQSYICFCLPAFEGRNCETYKDDQLICVNENGGCEQYCSDHTGTKRSCRCHEGYSLLADGVSCTPTVEYPCGKIPILENRNASKPQGRIVGGKVCPKGECPWQXLLXVNGAQLCGGTLINTIWVASAAHCFDKIKNWRNLIAVLGEHDLSEHDGDEQSRRVAQVIIPSTYIPGTTNHDIALLRLHQPVVLTDHVVPLCLPERAFSERTLAFVRFSLVSGWGQLLDRGATALELMVLNVPRLMTQDCLQQSRKVGDSPNITEYMFCAGYSDGSKDSCKGDSGGPHATHYRGTWYLTGIVSWGQGCASVGHFGVYTRVSQYIEWLQKLMRSEPRPGVLLRAPFP</sequence>
<keyword id="KW-0094">Blood coagulation</keyword>
<keyword id="KW-0106">Calcium</keyword>
<keyword id="KW-0165">Cleavage on pair of basic residues</keyword>
<keyword id="KW-1015">Disulfide bond</keyword>
<keyword id="KW-0245">EGF-like domain</keyword>
<keyword id="KW-0301">Gamma-carboxyglutamic acid</keyword>
<keyword id="KW-0325">Glycoprotein</keyword>
<keyword id="KW-0356">Hemostasis</keyword>
<keyword id="KW-0378">Hydrolase</keyword>
<keyword id="KW-0379">Hydroxylation</keyword>
<keyword id="KW-0645">Protease</keyword>
<keyword id="KW-1185">Reference proteome</keyword>
<keyword id="KW-0677">Repeat</keyword>
<keyword id="KW-0964">Secreted</keyword>
<keyword id="KW-0720">Serine protease</keyword>
<keyword id="KW-0732">Signal</keyword>
<keyword id="KW-0865">Zymogen</keyword>
<feature type="signal peptide" evidence="4">
    <location>
        <begin position="1"/>
        <end position="20"/>
    </location>
</feature>
<feature type="propeptide" id="PRO_0000235179" evidence="1">
    <location>
        <begin position="21"/>
        <end position="60"/>
    </location>
</feature>
<feature type="chain" id="PRO_0000235180" description="Factor VII light chain">
    <location>
        <begin position="61"/>
        <end position="212"/>
    </location>
</feature>
<feature type="chain" id="PRO_0000235181" description="Factor VII heavy chain">
    <location>
        <begin position="213"/>
        <end position="466"/>
    </location>
</feature>
<feature type="domain" description="Gla" evidence="7">
    <location>
        <begin position="61"/>
        <end position="105"/>
    </location>
</feature>
<feature type="domain" description="EGF-like 1; calcium-binding" evidence="5">
    <location>
        <begin position="106"/>
        <end position="142"/>
    </location>
</feature>
<feature type="domain" description="EGF-like 2" evidence="5">
    <location>
        <begin position="147"/>
        <end position="188"/>
    </location>
</feature>
<feature type="domain" description="Peptidase S1" evidence="6">
    <location>
        <begin position="213"/>
        <end position="452"/>
    </location>
</feature>
<feature type="active site" description="Charge relay system" evidence="1">
    <location>
        <position position="253"/>
    </location>
</feature>
<feature type="active site" description="Charge relay system" evidence="1">
    <location>
        <position position="302"/>
    </location>
</feature>
<feature type="active site" description="Charge relay system" evidence="1">
    <location>
        <position position="404"/>
    </location>
</feature>
<feature type="binding site" evidence="1">
    <location>
        <position position="398"/>
    </location>
    <ligand>
        <name>substrate</name>
    </ligand>
</feature>
<feature type="site" description="Important for S-112 for O-xylosylation">
    <location>
        <position position="113"/>
    </location>
</feature>
<feature type="site" description="Cleavage; by factor Xa, factor XIIa, factor IXa, or thrombin" evidence="1">
    <location>
        <begin position="212"/>
        <end position="213"/>
    </location>
</feature>
<feature type="modified residue" description="4-carboxyglutamate" evidence="3 7">
    <location>
        <position position="66"/>
    </location>
</feature>
<feature type="modified residue" description="4-carboxyglutamate" evidence="3 7">
    <location>
        <position position="67"/>
    </location>
</feature>
<feature type="modified residue" description="4-carboxyglutamate" evidence="3 7">
    <location>
        <position position="74"/>
    </location>
</feature>
<feature type="modified residue" description="4-carboxyglutamate" evidence="3 7">
    <location>
        <position position="76"/>
    </location>
</feature>
<feature type="modified residue" description="4-carboxyglutamate" evidence="3 7">
    <location>
        <position position="79"/>
    </location>
</feature>
<feature type="modified residue" description="4-carboxyglutamate" evidence="3 7">
    <location>
        <position position="80"/>
    </location>
</feature>
<feature type="modified residue" description="4-carboxyglutamate" evidence="3 7">
    <location>
        <position position="85"/>
    </location>
</feature>
<feature type="modified residue" description="4-carboxyglutamate" evidence="3 7">
    <location>
        <position position="86"/>
    </location>
</feature>
<feature type="modified residue" description="4-carboxyglutamate" evidence="3 7">
    <location>
        <position position="89"/>
    </location>
</feature>
<feature type="modified residue" description="4-carboxyglutamate" evidence="3 7">
    <location>
        <position position="95"/>
    </location>
</feature>
<feature type="modified residue" description="(3R)-3-hydroxyaspartate" evidence="1">
    <location>
        <position position="123"/>
    </location>
</feature>
<feature type="glycosylation site" description="O-linked (Glc...) serine; alternate" evidence="2">
    <location>
        <position position="112"/>
    </location>
</feature>
<feature type="glycosylation site" description="O-linked (Xyl...) serine; alternate" evidence="2">
    <location>
        <position position="112"/>
    </location>
</feature>
<feature type="glycosylation site" description="O-linked (Fuc) serine" evidence="1">
    <location>
        <position position="120"/>
    </location>
</feature>
<feature type="glycosylation site" description="N-linked (GlcNAc...) asparagine" evidence="4">
    <location>
        <position position="205"/>
    </location>
</feature>
<feature type="glycosylation site" description="N-linked (GlcNAc...) asparagine" evidence="4">
    <location>
        <position position="382"/>
    </location>
</feature>
<feature type="disulfide bond" evidence="1">
    <location>
        <begin position="77"/>
        <end position="82"/>
    </location>
</feature>
<feature type="disulfide bond" evidence="1">
    <location>
        <begin position="110"/>
        <end position="121"/>
    </location>
</feature>
<feature type="disulfide bond" evidence="1">
    <location>
        <begin position="115"/>
        <end position="130"/>
    </location>
</feature>
<feature type="disulfide bond" evidence="1">
    <location>
        <begin position="132"/>
        <end position="141"/>
    </location>
</feature>
<feature type="disulfide bond" evidence="1">
    <location>
        <begin position="151"/>
        <end position="162"/>
    </location>
</feature>
<feature type="disulfide bond" evidence="1">
    <location>
        <begin position="158"/>
        <end position="172"/>
    </location>
</feature>
<feature type="disulfide bond" evidence="1">
    <location>
        <begin position="174"/>
        <end position="187"/>
    </location>
</feature>
<feature type="disulfide bond" evidence="1">
    <location>
        <begin position="195"/>
        <end position="322"/>
    </location>
</feature>
<feature type="disulfide bond" evidence="1">
    <location>
        <begin position="219"/>
        <end position="224"/>
    </location>
</feature>
<feature type="disulfide bond" evidence="1">
    <location>
        <begin position="238"/>
        <end position="254"/>
    </location>
</feature>
<feature type="disulfide bond" evidence="1">
    <location>
        <begin position="370"/>
        <end position="389"/>
    </location>
</feature>
<feature type="disulfide bond" evidence="1">
    <location>
        <begin position="400"/>
        <end position="428"/>
    </location>
</feature>
<proteinExistence type="inferred from homology"/>
<protein>
    <recommendedName>
        <fullName>Coagulation factor VII</fullName>
        <ecNumber>3.4.21.21</ecNumber>
    </recommendedName>
    <alternativeName>
        <fullName>Serum prothrombin conversion accelerator</fullName>
    </alternativeName>
    <component>
        <recommendedName>
            <fullName>Factor VII light chain</fullName>
        </recommendedName>
    </component>
    <component>
        <recommendedName>
            <fullName>Factor VII heavy chain</fullName>
        </recommendedName>
    </component>
</protein>
<reference key="1">
    <citation type="journal article" date="2006" name="Hum. Genet.">
        <title>Human F7 sequence is split into three deep clades that are related to FVII plasma levels.</title>
        <authorList>
            <person name="Sabater-Lleal M."/>
            <person name="Soria J.M."/>
            <person name="Bertranpetit J."/>
            <person name="Almasy L."/>
            <person name="Blangero J."/>
            <person name="Fontcuberta J."/>
            <person name="Calafell F."/>
        </authorList>
    </citation>
    <scope>NUCLEOTIDE SEQUENCE [GENOMIC DNA]</scope>
</reference>
<dbReference type="EC" id="3.4.21.21"/>
<dbReference type="EMBL" id="DQ142912">
    <property type="protein sequence ID" value="ABD17892.1"/>
    <property type="molecule type" value="Genomic_DNA"/>
</dbReference>
<dbReference type="EMBL" id="DQ142913">
    <property type="protein sequence ID" value="ABD17893.1"/>
    <property type="molecule type" value="Genomic_DNA"/>
</dbReference>
<dbReference type="STRING" id="9597.ENSPPAP00000033219"/>
<dbReference type="MEROPS" id="S01.215"/>
<dbReference type="GlyCosmos" id="Q2F9P4">
    <property type="glycosylation" value="4 sites, No reported glycans"/>
</dbReference>
<dbReference type="eggNOG" id="ENOG502QRGI">
    <property type="taxonomic scope" value="Eukaryota"/>
</dbReference>
<dbReference type="Proteomes" id="UP000240080">
    <property type="component" value="Unplaced"/>
</dbReference>
<dbReference type="GO" id="GO:0005615">
    <property type="term" value="C:extracellular space"/>
    <property type="evidence" value="ECO:0007669"/>
    <property type="project" value="TreeGrafter"/>
</dbReference>
<dbReference type="GO" id="GO:0005796">
    <property type="term" value="C:Golgi lumen"/>
    <property type="evidence" value="ECO:0007669"/>
    <property type="project" value="UniProtKB-ARBA"/>
</dbReference>
<dbReference type="GO" id="GO:0005509">
    <property type="term" value="F:calcium ion binding"/>
    <property type="evidence" value="ECO:0007669"/>
    <property type="project" value="InterPro"/>
</dbReference>
<dbReference type="GO" id="GO:0004252">
    <property type="term" value="F:serine-type endopeptidase activity"/>
    <property type="evidence" value="ECO:0007669"/>
    <property type="project" value="UniProtKB-EC"/>
</dbReference>
<dbReference type="GO" id="GO:0007596">
    <property type="term" value="P:blood coagulation"/>
    <property type="evidence" value="ECO:0007669"/>
    <property type="project" value="UniProtKB-KW"/>
</dbReference>
<dbReference type="GO" id="GO:0006508">
    <property type="term" value="P:proteolysis"/>
    <property type="evidence" value="ECO:0007669"/>
    <property type="project" value="UniProtKB-KW"/>
</dbReference>
<dbReference type="CDD" id="cd00054">
    <property type="entry name" value="EGF_CA"/>
    <property type="match status" value="1"/>
</dbReference>
<dbReference type="CDD" id="cd00190">
    <property type="entry name" value="Tryp_SPc"/>
    <property type="match status" value="1"/>
</dbReference>
<dbReference type="FunFam" id="2.10.25.10:FF:000259">
    <property type="entry name" value="Coagulation factor VII"/>
    <property type="match status" value="1"/>
</dbReference>
<dbReference type="FunFam" id="2.10.25.10:FF:000420">
    <property type="entry name" value="Coagulation factor VII"/>
    <property type="match status" value="1"/>
</dbReference>
<dbReference type="FunFam" id="2.40.10.10:FF:000013">
    <property type="entry name" value="Coagulation factor X"/>
    <property type="match status" value="1"/>
</dbReference>
<dbReference type="FunFam" id="4.10.740.10:FF:000001">
    <property type="entry name" value="vitamin K-dependent protein S"/>
    <property type="match status" value="1"/>
</dbReference>
<dbReference type="Gene3D" id="4.10.740.10">
    <property type="entry name" value="Coagulation Factor IX"/>
    <property type="match status" value="1"/>
</dbReference>
<dbReference type="Gene3D" id="2.10.25.10">
    <property type="entry name" value="Laminin"/>
    <property type="match status" value="2"/>
</dbReference>
<dbReference type="Gene3D" id="2.40.10.10">
    <property type="entry name" value="Trypsin-like serine proteases"/>
    <property type="match status" value="2"/>
</dbReference>
<dbReference type="InterPro" id="IPR017857">
    <property type="entry name" value="Coagulation_fac-like_Gla_dom"/>
</dbReference>
<dbReference type="InterPro" id="IPR001881">
    <property type="entry name" value="EGF-like_Ca-bd_dom"/>
</dbReference>
<dbReference type="InterPro" id="IPR000742">
    <property type="entry name" value="EGF-like_dom"/>
</dbReference>
<dbReference type="InterPro" id="IPR000152">
    <property type="entry name" value="EGF-type_Asp/Asn_hydroxyl_site"/>
</dbReference>
<dbReference type="InterPro" id="IPR018097">
    <property type="entry name" value="EGF_Ca-bd_CS"/>
</dbReference>
<dbReference type="InterPro" id="IPR035972">
    <property type="entry name" value="GLA-like_dom_SF"/>
</dbReference>
<dbReference type="InterPro" id="IPR000294">
    <property type="entry name" value="GLA_domain"/>
</dbReference>
<dbReference type="InterPro" id="IPR012224">
    <property type="entry name" value="Pept_S1A_FX"/>
</dbReference>
<dbReference type="InterPro" id="IPR050442">
    <property type="entry name" value="Peptidase_S1_coag_factors"/>
</dbReference>
<dbReference type="InterPro" id="IPR009003">
    <property type="entry name" value="Peptidase_S1_PA"/>
</dbReference>
<dbReference type="InterPro" id="IPR043504">
    <property type="entry name" value="Peptidase_S1_PA_chymotrypsin"/>
</dbReference>
<dbReference type="InterPro" id="IPR001314">
    <property type="entry name" value="Peptidase_S1A"/>
</dbReference>
<dbReference type="InterPro" id="IPR001254">
    <property type="entry name" value="Trypsin_dom"/>
</dbReference>
<dbReference type="InterPro" id="IPR033116">
    <property type="entry name" value="TRYPSIN_SER"/>
</dbReference>
<dbReference type="PANTHER" id="PTHR24278">
    <property type="entry name" value="COAGULATION FACTOR"/>
    <property type="match status" value="1"/>
</dbReference>
<dbReference type="PANTHER" id="PTHR24278:SF26">
    <property type="entry name" value="COAGULATION FACTOR VII"/>
    <property type="match status" value="1"/>
</dbReference>
<dbReference type="Pfam" id="PF00008">
    <property type="entry name" value="EGF"/>
    <property type="match status" value="1"/>
</dbReference>
<dbReference type="Pfam" id="PF14670">
    <property type="entry name" value="FXa_inhibition"/>
    <property type="match status" value="1"/>
</dbReference>
<dbReference type="Pfam" id="PF00594">
    <property type="entry name" value="Gla"/>
    <property type="match status" value="1"/>
</dbReference>
<dbReference type="Pfam" id="PF00089">
    <property type="entry name" value="Trypsin"/>
    <property type="match status" value="1"/>
</dbReference>
<dbReference type="PIRSF" id="PIRSF001143">
    <property type="entry name" value="Factor_X"/>
    <property type="match status" value="1"/>
</dbReference>
<dbReference type="PRINTS" id="PR00722">
    <property type="entry name" value="CHYMOTRYPSIN"/>
</dbReference>
<dbReference type="PRINTS" id="PR00010">
    <property type="entry name" value="EGFBLOOD"/>
</dbReference>
<dbReference type="PRINTS" id="PR00001">
    <property type="entry name" value="GLABLOOD"/>
</dbReference>
<dbReference type="SMART" id="SM00181">
    <property type="entry name" value="EGF"/>
    <property type="match status" value="2"/>
</dbReference>
<dbReference type="SMART" id="SM00179">
    <property type="entry name" value="EGF_CA"/>
    <property type="match status" value="1"/>
</dbReference>
<dbReference type="SMART" id="SM00069">
    <property type="entry name" value="GLA"/>
    <property type="match status" value="1"/>
</dbReference>
<dbReference type="SMART" id="SM00020">
    <property type="entry name" value="Tryp_SPc"/>
    <property type="match status" value="1"/>
</dbReference>
<dbReference type="SUPFAM" id="SSF57630">
    <property type="entry name" value="GLA-domain"/>
    <property type="match status" value="1"/>
</dbReference>
<dbReference type="SUPFAM" id="SSF50494">
    <property type="entry name" value="Trypsin-like serine proteases"/>
    <property type="match status" value="1"/>
</dbReference>
<dbReference type="PROSITE" id="PS00010">
    <property type="entry name" value="ASX_HYDROXYL"/>
    <property type="match status" value="1"/>
</dbReference>
<dbReference type="PROSITE" id="PS00022">
    <property type="entry name" value="EGF_1"/>
    <property type="match status" value="1"/>
</dbReference>
<dbReference type="PROSITE" id="PS01186">
    <property type="entry name" value="EGF_2"/>
    <property type="match status" value="1"/>
</dbReference>
<dbReference type="PROSITE" id="PS50026">
    <property type="entry name" value="EGF_3"/>
    <property type="match status" value="1"/>
</dbReference>
<dbReference type="PROSITE" id="PS01187">
    <property type="entry name" value="EGF_CA"/>
    <property type="match status" value="1"/>
</dbReference>
<dbReference type="PROSITE" id="PS00011">
    <property type="entry name" value="GLA_1"/>
    <property type="match status" value="1"/>
</dbReference>
<dbReference type="PROSITE" id="PS50998">
    <property type="entry name" value="GLA_2"/>
    <property type="match status" value="1"/>
</dbReference>
<dbReference type="PROSITE" id="PS50240">
    <property type="entry name" value="TRYPSIN_DOM"/>
    <property type="match status" value="1"/>
</dbReference>
<dbReference type="PROSITE" id="PS00135">
    <property type="entry name" value="TRYPSIN_SER"/>
    <property type="match status" value="1"/>
</dbReference>
<gene>
    <name type="primary">F7</name>
</gene>
<name>FA7_PANPA</name>
<organism>
    <name type="scientific">Pan paniscus</name>
    <name type="common">Pygmy chimpanzee</name>
    <name type="synonym">Bonobo</name>
    <dbReference type="NCBI Taxonomy" id="9597"/>
    <lineage>
        <taxon>Eukaryota</taxon>
        <taxon>Metazoa</taxon>
        <taxon>Chordata</taxon>
        <taxon>Craniata</taxon>
        <taxon>Vertebrata</taxon>
        <taxon>Euteleostomi</taxon>
        <taxon>Mammalia</taxon>
        <taxon>Eutheria</taxon>
        <taxon>Euarchontoglires</taxon>
        <taxon>Primates</taxon>
        <taxon>Haplorrhini</taxon>
        <taxon>Catarrhini</taxon>
        <taxon>Hominidae</taxon>
        <taxon>Pan</taxon>
    </lineage>
</organism>